<reference key="1">
    <citation type="journal article" date="2013" name="Nature">
        <title>Pan genome of the phytoplankton Emiliania underpins its global distribution.</title>
        <authorList>
            <person name="Read B.A."/>
            <person name="Kegel J."/>
            <person name="Klute M.J."/>
            <person name="Kuo A."/>
            <person name="Lefebvre S.C."/>
            <person name="Maumus F."/>
            <person name="Mayer C."/>
            <person name="Miller J."/>
            <person name="Monier A."/>
            <person name="Salamov A."/>
            <person name="Young J."/>
            <person name="Aguilar M."/>
            <person name="Claverie J.M."/>
            <person name="Frickenhaus S."/>
            <person name="Gonzalez K."/>
            <person name="Herman E.K."/>
            <person name="Lin Y.C."/>
            <person name="Napier J."/>
            <person name="Ogata H."/>
            <person name="Sarno A.F."/>
            <person name="Shmutz J."/>
            <person name="Schroeder D."/>
            <person name="de Vargas C."/>
            <person name="Verret F."/>
            <person name="von Dassow P."/>
            <person name="Valentin K."/>
            <person name="Van de Peer Y."/>
            <person name="Wheeler G."/>
            <person name="Dacks J.B."/>
            <person name="Delwiche C.F."/>
            <person name="Dyhrman S.T."/>
            <person name="Glockner G."/>
            <person name="John U."/>
            <person name="Richards T."/>
            <person name="Worden A.Z."/>
            <person name="Zhang X."/>
            <person name="Grigoriev I.V."/>
            <person name="Allen A.E."/>
            <person name="Bidle K."/>
            <person name="Borodovsky M."/>
            <person name="Bowler C."/>
            <person name="Brownlee C."/>
            <person name="Cock J.M."/>
            <person name="Elias M."/>
            <person name="Gladyshev V.N."/>
            <person name="Groth M."/>
            <person name="Guda C."/>
            <person name="Hadaegh A."/>
            <person name="Iglesias-Rodriguez M.D."/>
            <person name="Jenkins J."/>
            <person name="Jones B.M."/>
            <person name="Lawson T."/>
            <person name="Leese F."/>
            <person name="Lindquist E."/>
            <person name="Lobanov A."/>
            <person name="Lomsadze A."/>
            <person name="Malik S.B."/>
            <person name="Marsh M.E."/>
            <person name="Mackinder L."/>
            <person name="Mock T."/>
            <person name="Mueller-Roeber B."/>
            <person name="Pagarete A."/>
            <person name="Parker M."/>
            <person name="Probert I."/>
            <person name="Quesneville H."/>
            <person name="Raines C."/>
            <person name="Rensing S.A."/>
            <person name="Riano-Pachon D.M."/>
            <person name="Richier S."/>
            <person name="Rokitta S."/>
            <person name="Shiraiwa Y."/>
            <person name="Soanes D.M."/>
            <person name="van der Giezen M."/>
            <person name="Wahlund T.M."/>
            <person name="Williams B."/>
            <person name="Wilson W."/>
            <person name="Wolfe G."/>
            <person name="Wurch L.L."/>
        </authorList>
    </citation>
    <scope>NUCLEOTIDE SEQUENCE [LARGE SCALE GENOMIC DNA]</scope>
    <source>
        <strain>CCMP1516</strain>
    </source>
</reference>
<reference key="2">
    <citation type="journal article" date="2015" name="Science">
        <title>Identification of the algal dimethyl sulfide-releasing enzyme: A missing link in the marine sulfur cycle.</title>
        <authorList>
            <person name="Alcolombri U."/>
            <person name="Ben-Dor S."/>
            <person name="Feldmesser E."/>
            <person name="Levin Y."/>
            <person name="Tawfik D.S."/>
            <person name="Vardi A."/>
        </authorList>
    </citation>
    <scope>IDENTIFICATION</scope>
</reference>
<organism>
    <name type="scientific">Emiliania huxleyi (strain CCMP1516)</name>
    <dbReference type="NCBI Taxonomy" id="280463"/>
    <lineage>
        <taxon>Eukaryota</taxon>
        <taxon>Haptista</taxon>
        <taxon>Haptophyta</taxon>
        <taxon>Prymnesiophyceae</taxon>
        <taxon>Isochrysidales</taxon>
        <taxon>Noelaerhabdaceae</taxon>
        <taxon>Emiliania</taxon>
    </lineage>
</organism>
<protein>
    <recommendedName>
        <fullName evidence="2">Dimethylsulfoniopropionate lyase 2</fullName>
        <shortName evidence="2">DMSP lyase 2</shortName>
        <ecNumber evidence="2">4.4.1.3</ecNumber>
    </recommendedName>
    <alternativeName>
        <fullName evidence="2">Dimethylpropiothetin dethiomethylase 2</fullName>
    </alternativeName>
</protein>
<feature type="chain" id="PRO_0000433889" description="Dimethylsulfoniopropionate lyase 2">
    <location>
        <begin position="1"/>
        <end position="353"/>
    </location>
</feature>
<feature type="region of interest" description="Disordered" evidence="3">
    <location>
        <begin position="326"/>
        <end position="353"/>
    </location>
</feature>
<feature type="compositionally biased region" description="Basic and acidic residues" evidence="3">
    <location>
        <begin position="331"/>
        <end position="346"/>
    </location>
</feature>
<feature type="active site" description="Proton donor/acceptor" evidence="1">
    <location>
        <position position="125"/>
    </location>
</feature>
<feature type="active site" description="Proton donor/acceptor" evidence="1">
    <location>
        <position position="274"/>
    </location>
</feature>
<sequence length="353" mass="37891">MGSASSKTRKDKAKSSTIAACPTDTAAAKACPTRLDDGLAQVAMFAGLRQVTMGVLRIDYDYQTNLGDILDPRSFDFRLVSATVEGLTFKRAQEGEPLPCYVMSNLDGAVKKLIDAGADFIVGDCGFLVYWQVYVRDFAQQYAGGRACPVMLSSLVLSLPLLATIPVGGKIGILTASKGSLMKMQKKLASVIELQKEEARTRAVPAAVQPSGIEINFSDPRFKVVGLDTVNSFKTALADDSGVDDRRSIAIEIAKYCKQVACEDPAICAWLIECTEAGGFSWAIKLGTGLPVWDPVTIGRFLSLGFTSSLPSVALTLGETGQVALDPNETDVSKGRPTKAEHRFGPEFEEMLQ</sequence>
<dbReference type="EC" id="4.4.1.3" evidence="2"/>
<dbReference type="EMBL" id="KB868012">
    <property type="protein sequence ID" value="EOD11554.1"/>
    <property type="molecule type" value="Genomic_DNA"/>
</dbReference>
<dbReference type="RefSeq" id="XP_005763983.1">
    <property type="nucleotide sequence ID" value="XM_005763926.1"/>
</dbReference>
<dbReference type="PaxDb" id="2903-EOD11554"/>
<dbReference type="EnsemblProtists" id="EOD11554">
    <property type="protein sequence ID" value="EOD11554"/>
    <property type="gene ID" value="EMIHUDRAFT_437551"/>
</dbReference>
<dbReference type="GeneID" id="17257733"/>
<dbReference type="KEGG" id="ehx:EMIHUDRAFT_437551"/>
<dbReference type="HOGENOM" id="CLU_786270_0_0_1"/>
<dbReference type="Proteomes" id="UP000013827">
    <property type="component" value="Unassembled WGS sequence"/>
</dbReference>
<dbReference type="GO" id="GO:0047869">
    <property type="term" value="F:dimethylpropiothetin dethiomethylase activity"/>
    <property type="evidence" value="ECO:0007669"/>
    <property type="project" value="UniProtKB-EC"/>
</dbReference>
<comment type="function">
    <text evidence="2">Mediates cleavage of dimethylsulfoniopropionate (DMSP) into dimethyl sulfide (DMS) and acrylate. DMS is the principal form by which sulfur is transported from oceans to the atmosphere and is a key component of the ocean sulfur cycle.</text>
</comment>
<comment type="catalytic activity">
    <reaction evidence="1">
        <text>S,S-dimethyl-beta-propiothetin = acrylate + dimethyl sulfide + H(+)</text>
        <dbReference type="Rhea" id="RHEA:19965"/>
        <dbReference type="ChEBI" id="CHEBI:15378"/>
        <dbReference type="ChEBI" id="CHEBI:16457"/>
        <dbReference type="ChEBI" id="CHEBI:17437"/>
        <dbReference type="ChEBI" id="CHEBI:37080"/>
        <dbReference type="EC" id="4.4.1.3"/>
    </reaction>
</comment>
<comment type="subunit">
    <text evidence="1">Homotetramer.</text>
</comment>
<comment type="similarity">
    <text evidence="5">Belongs to the aspartate/glutamate racemases family. ALMA1 subfamily.</text>
</comment>
<gene>
    <name evidence="4" type="primary">ALMA2</name>
    <name evidence="6" type="ORF">EMIHUDRAFT_437551</name>
</gene>
<evidence type="ECO:0000250" key="1">
    <source>
        <dbReference type="UniProtKB" id="P0DN21"/>
    </source>
</evidence>
<evidence type="ECO:0000250" key="2">
    <source>
        <dbReference type="UniProtKB" id="P0DN23"/>
    </source>
</evidence>
<evidence type="ECO:0000256" key="3">
    <source>
        <dbReference type="SAM" id="MobiDB-lite"/>
    </source>
</evidence>
<evidence type="ECO:0000303" key="4">
    <source>
    </source>
</evidence>
<evidence type="ECO:0000305" key="5"/>
<evidence type="ECO:0000312" key="6">
    <source>
        <dbReference type="EMBL" id="EOD11554.1"/>
    </source>
</evidence>
<proteinExistence type="inferred from homology"/>
<accession>R1DS73</accession>
<name>ALM2_EMIH1</name>
<keyword id="KW-0456">Lyase</keyword>
<keyword id="KW-1185">Reference proteome</keyword>